<reference key="1">
    <citation type="submission" date="2005-04" db="EMBL/GenBank/DDBJ databases">
        <title>Characterization of antimicrobial peptide cecropin from Glossina morsitans morsitans.</title>
        <authorList>
            <person name="Hu C."/>
            <person name="Aksoy S."/>
        </authorList>
    </citation>
    <scope>NUCLEOTIDE SEQUENCE [MRNA]</scope>
</reference>
<reference evidence="2" key="2">
    <citation type="journal article" date="2002" name="Insect Biochem. Mol. Biol.">
        <title>Immunopeptides in the defense reactions of Glossina morsitans to bacterial and Trypanosoma brucei brucei infections.</title>
        <authorList>
            <person name="Boulanger N."/>
            <person name="Brun R."/>
            <person name="Ehret-Sabatier L."/>
            <person name="Kunz C."/>
            <person name="Bulet P."/>
        </authorList>
    </citation>
    <scope>PROTEIN SEQUENCE OF 24-62</scope>
    <scope>FUNCTION</scope>
    <scope>SUBUNIT</scope>
    <scope>SUBCELLULAR LOCATION</scope>
    <scope>TISSUE SPECIFICITY</scope>
    <scope>INDUCTION</scope>
    <scope>MASS SPECTROMETRY</scope>
    <scope>AMIDATION AT ARG-62</scope>
    <source>
        <tissue>Hemolymph</tissue>
    </source>
</reference>
<evidence type="ECO:0000269" key="1">
    <source>
    </source>
</evidence>
<evidence type="ECO:0000305" key="2"/>
<comment type="function">
    <text evidence="1">Cecropins have lytic and antibacterial activity against several Gram-negative bacteria.</text>
</comment>
<comment type="subunit">
    <text evidence="1">Monomer.</text>
</comment>
<comment type="subcellular location">
    <subcellularLocation>
        <location evidence="1">Secreted</location>
    </subcellularLocation>
</comment>
<comment type="tissue specificity">
    <text evidence="1">Hemolymph.</text>
</comment>
<comment type="induction">
    <text evidence="1">By bacterial and parasitic infection.</text>
</comment>
<comment type="mass spectrometry" mass="4205.8" method="MALDI" evidence="1"/>
<comment type="similarity">
    <text evidence="2">Belongs to the cecropin family.</text>
</comment>
<accession>P83403</accession>
<accession>Q4U3L1</accession>
<protein>
    <recommendedName>
        <fullName>Cecropin</fullName>
    </recommendedName>
</protein>
<feature type="signal peptide" evidence="1">
    <location>
        <begin position="1"/>
        <end position="23"/>
    </location>
</feature>
<feature type="peptide" id="PRO_0000044680" description="Cecropin">
    <location>
        <begin position="24"/>
        <end position="62"/>
    </location>
</feature>
<feature type="modified residue" description="Arginine amide" evidence="1">
    <location>
        <position position="62"/>
    </location>
</feature>
<keyword id="KW-0027">Amidation</keyword>
<keyword id="KW-0044">Antibiotic</keyword>
<keyword id="KW-0929">Antimicrobial</keyword>
<keyword id="KW-0903">Direct protein sequencing</keyword>
<keyword id="KW-0391">Immunity</keyword>
<keyword id="KW-0399">Innate immunity</keyword>
<keyword id="KW-0964">Secreted</keyword>
<keyword id="KW-0732">Signal</keyword>
<organism>
    <name type="scientific">Glossina morsitans morsitans</name>
    <name type="common">Savannah tsetse fly</name>
    <dbReference type="NCBI Taxonomy" id="37546"/>
    <lineage>
        <taxon>Eukaryota</taxon>
        <taxon>Metazoa</taxon>
        <taxon>Ecdysozoa</taxon>
        <taxon>Arthropoda</taxon>
        <taxon>Hexapoda</taxon>
        <taxon>Insecta</taxon>
        <taxon>Pterygota</taxon>
        <taxon>Neoptera</taxon>
        <taxon>Endopterygota</taxon>
        <taxon>Diptera</taxon>
        <taxon>Brachycera</taxon>
        <taxon>Muscomorpha</taxon>
        <taxon>Hippoboscoidea</taxon>
        <taxon>Glossinidae</taxon>
        <taxon>Glossina</taxon>
    </lineage>
</organism>
<dbReference type="EMBL" id="DQ016433">
    <property type="protein sequence ID" value="AAY41177.1"/>
    <property type="molecule type" value="mRNA"/>
</dbReference>
<dbReference type="SMR" id="P83403"/>
<dbReference type="STRING" id="37546.P83403"/>
<dbReference type="EnsemblMetazoa" id="GMOY011562-RA">
    <property type="protein sequence ID" value="GMOY011562-PA"/>
    <property type="gene ID" value="GMOY011562"/>
</dbReference>
<dbReference type="VEuPathDB" id="VectorBase:GMOY011562"/>
<dbReference type="Proteomes" id="UP000092444">
    <property type="component" value="Unassembled WGS sequence"/>
</dbReference>
<dbReference type="GO" id="GO:0005576">
    <property type="term" value="C:extracellular region"/>
    <property type="evidence" value="ECO:0000314"/>
    <property type="project" value="UniProtKB"/>
</dbReference>
<dbReference type="GO" id="GO:0005615">
    <property type="term" value="C:extracellular space"/>
    <property type="evidence" value="ECO:0007669"/>
    <property type="project" value="TreeGrafter"/>
</dbReference>
<dbReference type="GO" id="GO:0019731">
    <property type="term" value="P:antibacterial humoral response"/>
    <property type="evidence" value="ECO:0000314"/>
    <property type="project" value="UniProtKB"/>
</dbReference>
<dbReference type="GO" id="GO:0050829">
    <property type="term" value="P:defense response to Gram-negative bacterium"/>
    <property type="evidence" value="ECO:0000314"/>
    <property type="project" value="UniProtKB"/>
</dbReference>
<dbReference type="GO" id="GO:0050830">
    <property type="term" value="P:defense response to Gram-positive bacterium"/>
    <property type="evidence" value="ECO:0000314"/>
    <property type="project" value="UniProtKB"/>
</dbReference>
<dbReference type="GO" id="GO:0045087">
    <property type="term" value="P:innate immune response"/>
    <property type="evidence" value="ECO:0007669"/>
    <property type="project" value="UniProtKB-KW"/>
</dbReference>
<dbReference type="InterPro" id="IPR000875">
    <property type="entry name" value="Cecropin"/>
</dbReference>
<dbReference type="InterPro" id="IPR020400">
    <property type="entry name" value="Cecropin_insect"/>
</dbReference>
<dbReference type="PANTHER" id="PTHR38329">
    <property type="entry name" value="CECROPIN-A1-RELATED"/>
    <property type="match status" value="1"/>
</dbReference>
<dbReference type="PANTHER" id="PTHR38329:SF1">
    <property type="entry name" value="CECROPIN-A1-RELATED"/>
    <property type="match status" value="1"/>
</dbReference>
<dbReference type="Pfam" id="PF00272">
    <property type="entry name" value="Cecropin"/>
    <property type="match status" value="1"/>
</dbReference>
<dbReference type="PROSITE" id="PS00268">
    <property type="entry name" value="CECROPIN"/>
    <property type="match status" value="1"/>
</dbReference>
<sequence length="63" mass="6850">MNFYKIFVFIALILALSVSQSEAGWLKKIGKKIERVGQNTRDATVKGLEVAQQAANVAATVRG</sequence>
<name>CEC_GLOMM</name>
<proteinExistence type="evidence at protein level"/>